<organism>
    <name type="scientific">Acinetobacter baumannii (strain ACICU)</name>
    <dbReference type="NCBI Taxonomy" id="405416"/>
    <lineage>
        <taxon>Bacteria</taxon>
        <taxon>Pseudomonadati</taxon>
        <taxon>Pseudomonadota</taxon>
        <taxon>Gammaproteobacteria</taxon>
        <taxon>Moraxellales</taxon>
        <taxon>Moraxellaceae</taxon>
        <taxon>Acinetobacter</taxon>
        <taxon>Acinetobacter calcoaceticus/baumannii complex</taxon>
    </lineage>
</organism>
<feature type="chain" id="PRO_1000096707" description="N-acetyl-gamma-glutamyl-phosphate reductase">
    <location>
        <begin position="1"/>
        <end position="349"/>
    </location>
</feature>
<feature type="active site" evidence="1">
    <location>
        <position position="149"/>
    </location>
</feature>
<protein>
    <recommendedName>
        <fullName evidence="1">N-acetyl-gamma-glutamyl-phosphate reductase</fullName>
        <shortName evidence="1">AGPR</shortName>
        <ecNumber evidence="1">1.2.1.38</ecNumber>
    </recommendedName>
    <alternativeName>
        <fullName evidence="1">N-acetyl-glutamate semialdehyde dehydrogenase</fullName>
        <shortName evidence="1">NAGSA dehydrogenase</shortName>
    </alternativeName>
</protein>
<name>ARGC_ACIBC</name>
<sequence>MISVGIVGGTGYTGVELLRILLRHPKAQVRVLTSRTEAGKPVADMFPNLRGHTDLHFSDLNIDALKECDVVFFATPHGVAMQHAKDLIAAGTKVIDLAADFRLQNLEQFEKWYGMEHACPDVLKDSVYGLTELNREKIKQAQVIGNPGCYPTTVQLGLAPLLKSAQALIETKNIIIDAKSGVSGAGRKASLGMIYSENADNFKAYGVAGHRHHPEIVEALENIAGKKDVFEGLLFVPHLVPMIRGMLSTIYVDLTEAGKQTDLQALYENFYANEKFVDVMPANSSPETRSVRGANELRIALYKPQPNKLIILAAQDNLVKGASGQAVQNMNLMFGFNEDEGLQGIGLLP</sequence>
<evidence type="ECO:0000255" key="1">
    <source>
        <dbReference type="HAMAP-Rule" id="MF_00150"/>
    </source>
</evidence>
<dbReference type="EC" id="1.2.1.38" evidence="1"/>
<dbReference type="EMBL" id="CP000863">
    <property type="protein sequence ID" value="ACC57335.1"/>
    <property type="molecule type" value="Genomic_DNA"/>
</dbReference>
<dbReference type="SMR" id="B2I2V4"/>
<dbReference type="KEGG" id="abc:ACICU_02023"/>
<dbReference type="HOGENOM" id="CLU_006384_0_1_6"/>
<dbReference type="UniPathway" id="UPA00068">
    <property type="reaction ID" value="UER00108"/>
</dbReference>
<dbReference type="Proteomes" id="UP000008839">
    <property type="component" value="Chromosome"/>
</dbReference>
<dbReference type="GO" id="GO:0005737">
    <property type="term" value="C:cytoplasm"/>
    <property type="evidence" value="ECO:0007669"/>
    <property type="project" value="UniProtKB-SubCell"/>
</dbReference>
<dbReference type="GO" id="GO:0003942">
    <property type="term" value="F:N-acetyl-gamma-glutamyl-phosphate reductase activity"/>
    <property type="evidence" value="ECO:0007669"/>
    <property type="project" value="UniProtKB-UniRule"/>
</dbReference>
<dbReference type="GO" id="GO:0051287">
    <property type="term" value="F:NAD binding"/>
    <property type="evidence" value="ECO:0007669"/>
    <property type="project" value="InterPro"/>
</dbReference>
<dbReference type="GO" id="GO:0070401">
    <property type="term" value="F:NADP+ binding"/>
    <property type="evidence" value="ECO:0007669"/>
    <property type="project" value="InterPro"/>
</dbReference>
<dbReference type="GO" id="GO:0006526">
    <property type="term" value="P:L-arginine biosynthetic process"/>
    <property type="evidence" value="ECO:0007669"/>
    <property type="project" value="UniProtKB-UniRule"/>
</dbReference>
<dbReference type="CDD" id="cd23934">
    <property type="entry name" value="AGPR_1_C"/>
    <property type="match status" value="1"/>
</dbReference>
<dbReference type="CDD" id="cd17895">
    <property type="entry name" value="AGPR_1_N"/>
    <property type="match status" value="1"/>
</dbReference>
<dbReference type="FunFam" id="3.30.360.10:FF:000014">
    <property type="entry name" value="N-acetyl-gamma-glutamyl-phosphate reductase"/>
    <property type="match status" value="1"/>
</dbReference>
<dbReference type="Gene3D" id="3.30.360.10">
    <property type="entry name" value="Dihydrodipicolinate Reductase, domain 2"/>
    <property type="match status" value="1"/>
</dbReference>
<dbReference type="Gene3D" id="3.40.50.720">
    <property type="entry name" value="NAD(P)-binding Rossmann-like Domain"/>
    <property type="match status" value="1"/>
</dbReference>
<dbReference type="HAMAP" id="MF_00150">
    <property type="entry name" value="ArgC_type1"/>
    <property type="match status" value="1"/>
</dbReference>
<dbReference type="InterPro" id="IPR023013">
    <property type="entry name" value="AGPR_AS"/>
</dbReference>
<dbReference type="InterPro" id="IPR000706">
    <property type="entry name" value="AGPR_type-1"/>
</dbReference>
<dbReference type="InterPro" id="IPR036291">
    <property type="entry name" value="NAD(P)-bd_dom_sf"/>
</dbReference>
<dbReference type="InterPro" id="IPR050085">
    <property type="entry name" value="NAGSA_dehydrogenase"/>
</dbReference>
<dbReference type="InterPro" id="IPR000534">
    <property type="entry name" value="Semialdehyde_DH_NAD-bd"/>
</dbReference>
<dbReference type="NCBIfam" id="TIGR01850">
    <property type="entry name" value="argC"/>
    <property type="match status" value="1"/>
</dbReference>
<dbReference type="PANTHER" id="PTHR32338:SF10">
    <property type="entry name" value="N-ACETYL-GAMMA-GLUTAMYL-PHOSPHATE REDUCTASE, CHLOROPLASTIC-RELATED"/>
    <property type="match status" value="1"/>
</dbReference>
<dbReference type="PANTHER" id="PTHR32338">
    <property type="entry name" value="N-ACETYL-GAMMA-GLUTAMYL-PHOSPHATE REDUCTASE, CHLOROPLASTIC-RELATED-RELATED"/>
    <property type="match status" value="1"/>
</dbReference>
<dbReference type="Pfam" id="PF01118">
    <property type="entry name" value="Semialdhyde_dh"/>
    <property type="match status" value="1"/>
</dbReference>
<dbReference type="Pfam" id="PF22698">
    <property type="entry name" value="Semialdhyde_dhC_1"/>
    <property type="match status" value="1"/>
</dbReference>
<dbReference type="SMART" id="SM00859">
    <property type="entry name" value="Semialdhyde_dh"/>
    <property type="match status" value="1"/>
</dbReference>
<dbReference type="SUPFAM" id="SSF55347">
    <property type="entry name" value="Glyceraldehyde-3-phosphate dehydrogenase-like, C-terminal domain"/>
    <property type="match status" value="1"/>
</dbReference>
<dbReference type="SUPFAM" id="SSF51735">
    <property type="entry name" value="NAD(P)-binding Rossmann-fold domains"/>
    <property type="match status" value="1"/>
</dbReference>
<dbReference type="PROSITE" id="PS01224">
    <property type="entry name" value="ARGC"/>
    <property type="match status" value="1"/>
</dbReference>
<accession>B2I2V4</accession>
<reference key="1">
    <citation type="journal article" date="2008" name="Antimicrob. Agents Chemother.">
        <title>Whole-genome pyrosequencing of an epidemic multidrug-resistant Acinetobacter baumannii strain belonging to the European clone II group.</title>
        <authorList>
            <person name="Iacono M."/>
            <person name="Villa L."/>
            <person name="Fortini D."/>
            <person name="Bordoni R."/>
            <person name="Imperi F."/>
            <person name="Bonnal R.J."/>
            <person name="Sicheritz-Ponten T."/>
            <person name="De Bellis G."/>
            <person name="Visca P."/>
            <person name="Cassone A."/>
            <person name="Carattoli A."/>
        </authorList>
    </citation>
    <scope>NUCLEOTIDE SEQUENCE [LARGE SCALE GENOMIC DNA]</scope>
    <source>
        <strain>ACICU</strain>
    </source>
</reference>
<comment type="function">
    <text evidence="1">Catalyzes the NADPH-dependent reduction of N-acetyl-5-glutamyl phosphate to yield N-acetyl-L-glutamate 5-semialdehyde.</text>
</comment>
<comment type="catalytic activity">
    <reaction evidence="1">
        <text>N-acetyl-L-glutamate 5-semialdehyde + phosphate + NADP(+) = N-acetyl-L-glutamyl 5-phosphate + NADPH + H(+)</text>
        <dbReference type="Rhea" id="RHEA:21588"/>
        <dbReference type="ChEBI" id="CHEBI:15378"/>
        <dbReference type="ChEBI" id="CHEBI:29123"/>
        <dbReference type="ChEBI" id="CHEBI:43474"/>
        <dbReference type="ChEBI" id="CHEBI:57783"/>
        <dbReference type="ChEBI" id="CHEBI:57936"/>
        <dbReference type="ChEBI" id="CHEBI:58349"/>
        <dbReference type="EC" id="1.2.1.38"/>
    </reaction>
</comment>
<comment type="pathway">
    <text evidence="1">Amino-acid biosynthesis; L-arginine biosynthesis; N(2)-acetyl-L-ornithine from L-glutamate: step 3/4.</text>
</comment>
<comment type="subcellular location">
    <subcellularLocation>
        <location evidence="1">Cytoplasm</location>
    </subcellularLocation>
</comment>
<comment type="similarity">
    <text evidence="1">Belongs to the NAGSA dehydrogenase family. Type 1 subfamily.</text>
</comment>
<keyword id="KW-0028">Amino-acid biosynthesis</keyword>
<keyword id="KW-0055">Arginine biosynthesis</keyword>
<keyword id="KW-0963">Cytoplasm</keyword>
<keyword id="KW-0521">NADP</keyword>
<keyword id="KW-0560">Oxidoreductase</keyword>
<gene>
    <name evidence="1" type="primary">argC</name>
    <name type="ordered locus">ACICU_02023</name>
</gene>
<proteinExistence type="inferred from homology"/>